<dbReference type="EMBL" id="D11411">
    <property type="protein sequence ID" value="BAA01993.1"/>
    <property type="molecule type" value="mRNA"/>
</dbReference>
<dbReference type="EMBL" id="D16544">
    <property type="protein sequence ID" value="BAA03980.1"/>
    <property type="molecule type" value="mRNA"/>
</dbReference>
<dbReference type="PIR" id="JC1191">
    <property type="entry name" value="JC1191"/>
</dbReference>
<dbReference type="RefSeq" id="NP_001075663.1">
    <property type="nucleotide sequence ID" value="NM_001082194.1"/>
</dbReference>
<dbReference type="FunCoup" id="P31097">
    <property type="interactions" value="13"/>
</dbReference>
<dbReference type="STRING" id="9986.ENSOCUP00000021885"/>
<dbReference type="GlyCosmos" id="P31097">
    <property type="glycosylation" value="5 sites, No reported glycans"/>
</dbReference>
<dbReference type="PaxDb" id="9986-ENSOCUP00000021885"/>
<dbReference type="GeneID" id="100008982"/>
<dbReference type="KEGG" id="ocu:100008982"/>
<dbReference type="CTD" id="6696"/>
<dbReference type="eggNOG" id="ENOG502S5R4">
    <property type="taxonomic scope" value="Eukaryota"/>
</dbReference>
<dbReference type="InParanoid" id="P31097"/>
<dbReference type="OrthoDB" id="9047304at2759"/>
<dbReference type="Proteomes" id="UP000001811">
    <property type="component" value="Unplaced"/>
</dbReference>
<dbReference type="GO" id="GO:0005615">
    <property type="term" value="C:extracellular space"/>
    <property type="evidence" value="ECO:0007669"/>
    <property type="project" value="UniProtKB-KW"/>
</dbReference>
<dbReference type="GO" id="GO:0005125">
    <property type="term" value="F:cytokine activity"/>
    <property type="evidence" value="ECO:0007669"/>
    <property type="project" value="UniProtKB-KW"/>
</dbReference>
<dbReference type="GO" id="GO:0050840">
    <property type="term" value="F:extracellular matrix binding"/>
    <property type="evidence" value="ECO:0007669"/>
    <property type="project" value="TreeGrafter"/>
</dbReference>
<dbReference type="GO" id="GO:0005178">
    <property type="term" value="F:integrin binding"/>
    <property type="evidence" value="ECO:0000250"/>
    <property type="project" value="UniProtKB"/>
</dbReference>
<dbReference type="GO" id="GO:0031214">
    <property type="term" value="P:biomineral tissue development"/>
    <property type="evidence" value="ECO:0007669"/>
    <property type="project" value="UniProtKB-KW"/>
</dbReference>
<dbReference type="GO" id="GO:0007155">
    <property type="term" value="P:cell adhesion"/>
    <property type="evidence" value="ECO:0007669"/>
    <property type="project" value="UniProtKB-KW"/>
</dbReference>
<dbReference type="GO" id="GO:0001649">
    <property type="term" value="P:osteoblast differentiation"/>
    <property type="evidence" value="ECO:0007669"/>
    <property type="project" value="TreeGrafter"/>
</dbReference>
<dbReference type="GO" id="GO:0045780">
    <property type="term" value="P:positive regulation of bone resorption"/>
    <property type="evidence" value="ECO:0007669"/>
    <property type="project" value="TreeGrafter"/>
</dbReference>
<dbReference type="InterPro" id="IPR002038">
    <property type="entry name" value="Osteopontin"/>
</dbReference>
<dbReference type="InterPro" id="IPR019841">
    <property type="entry name" value="Osteopontin_CS"/>
</dbReference>
<dbReference type="PANTHER" id="PTHR10607">
    <property type="entry name" value="OSTEOPONTIN"/>
    <property type="match status" value="1"/>
</dbReference>
<dbReference type="PANTHER" id="PTHR10607:SF1">
    <property type="entry name" value="OSTEOPONTIN"/>
    <property type="match status" value="1"/>
</dbReference>
<dbReference type="Pfam" id="PF00865">
    <property type="entry name" value="Osteopontin"/>
    <property type="match status" value="1"/>
</dbReference>
<dbReference type="PRINTS" id="PR00216">
    <property type="entry name" value="OSTEOPONTIN"/>
</dbReference>
<dbReference type="SMART" id="SM00017">
    <property type="entry name" value="OSTEO"/>
    <property type="match status" value="1"/>
</dbReference>
<dbReference type="PROSITE" id="PS00884">
    <property type="entry name" value="OSTEOPONTIN"/>
    <property type="match status" value="1"/>
</dbReference>
<feature type="signal peptide" evidence="1">
    <location>
        <begin position="1"/>
        <end position="16"/>
    </location>
</feature>
<feature type="chain" id="PRO_0000020324" description="Osteopontin">
    <location>
        <begin position="17"/>
        <end position="311"/>
    </location>
</feature>
<feature type="region of interest" description="Disordered" evidence="5">
    <location>
        <begin position="28"/>
        <end position="138"/>
    </location>
</feature>
<feature type="region of interest" description="Disordered" evidence="5">
    <location>
        <begin position="167"/>
        <end position="311"/>
    </location>
</feature>
<feature type="short sequence motif" description="Cell attachment site">
    <location>
        <begin position="155"/>
        <end position="157"/>
    </location>
</feature>
<feature type="compositionally biased region" description="Basic and acidic residues" evidence="5">
    <location>
        <begin position="28"/>
        <end position="38"/>
    </location>
</feature>
<feature type="compositionally biased region" description="Polar residues" evidence="5">
    <location>
        <begin position="47"/>
        <end position="62"/>
    </location>
</feature>
<feature type="compositionally biased region" description="Acidic residues" evidence="5">
    <location>
        <begin position="86"/>
        <end position="96"/>
    </location>
</feature>
<feature type="compositionally biased region" description="Basic and acidic residues" evidence="5">
    <location>
        <begin position="111"/>
        <end position="124"/>
    </location>
</feature>
<feature type="compositionally biased region" description="Basic and acidic residues" evidence="5">
    <location>
        <begin position="216"/>
        <end position="259"/>
    </location>
</feature>
<feature type="compositionally biased region" description="Low complexity" evidence="5">
    <location>
        <begin position="260"/>
        <end position="270"/>
    </location>
</feature>
<feature type="compositionally biased region" description="Basic and acidic residues" evidence="5">
    <location>
        <begin position="271"/>
        <end position="304"/>
    </location>
</feature>
<feature type="modified residue" description="Phosphoserine" evidence="4">
    <location>
        <position position="24"/>
    </location>
</feature>
<feature type="modified residue" description="Phosphoserine" evidence="2">
    <location>
        <position position="26"/>
    </location>
</feature>
<feature type="modified residue" description="Phosphoserine" evidence="2">
    <location>
        <position position="27"/>
    </location>
</feature>
<feature type="modified residue" description="Phosphoserine" evidence="2">
    <location>
        <position position="62"/>
    </location>
</feature>
<feature type="modified residue" description="Phosphoserine" evidence="2">
    <location>
        <position position="63"/>
    </location>
</feature>
<feature type="modified residue" description="Phosphoserine" evidence="4">
    <location>
        <position position="76"/>
    </location>
</feature>
<feature type="modified residue" description="Phosphoserine" evidence="4">
    <location>
        <position position="78"/>
    </location>
</feature>
<feature type="modified residue" description="Phosphoserine" evidence="4">
    <location>
        <position position="81"/>
    </location>
</feature>
<feature type="modified residue" description="Phosphoserine" evidence="4">
    <location>
        <position position="105"/>
    </location>
</feature>
<feature type="modified residue" description="Phosphoserine" evidence="2">
    <location>
        <position position="114"/>
    </location>
</feature>
<feature type="modified residue" description="Phosphoserine" evidence="4">
    <location>
        <position position="117"/>
    </location>
</feature>
<feature type="modified residue" description="Phosphoserine" evidence="2">
    <location>
        <position position="120"/>
    </location>
</feature>
<feature type="modified residue" description="Phosphoserine" evidence="4">
    <location>
        <position position="123"/>
    </location>
</feature>
<feature type="modified residue" description="Phosphoserine" evidence="4">
    <location>
        <position position="126"/>
    </location>
</feature>
<feature type="modified residue" description="Phosphoserine" evidence="2">
    <location>
        <position position="188"/>
    </location>
</feature>
<feature type="modified residue" description="Phosphoserine" evidence="2">
    <location>
        <position position="192"/>
    </location>
</feature>
<feature type="modified residue" description="Phosphoserine" evidence="2">
    <location>
        <position position="212"/>
    </location>
</feature>
<feature type="modified residue" description="Phosphoserine" evidence="2">
    <location>
        <position position="216"/>
    </location>
</feature>
<feature type="modified residue" description="Phosphoserine" evidence="2">
    <location>
        <position position="221"/>
    </location>
</feature>
<feature type="modified residue" description="Phosphoserine" evidence="2">
    <location>
        <position position="225"/>
    </location>
</feature>
<feature type="modified residue" description="Phosphoserine" evidence="2">
    <location>
        <position position="231"/>
    </location>
</feature>
<feature type="modified residue" description="Phosphothreonine" evidence="2">
    <location>
        <position position="234"/>
    </location>
</feature>
<feature type="modified residue" description="Phosphoserine" evidence="2">
    <location>
        <position position="236"/>
    </location>
</feature>
<feature type="modified residue" description="Phosphoserine" evidence="2">
    <location>
        <position position="251"/>
    </location>
</feature>
<feature type="modified residue" description="Phosphoserine" evidence="2">
    <location>
        <position position="255"/>
    </location>
</feature>
<feature type="modified residue" description="Phosphoserine" evidence="2">
    <location>
        <position position="260"/>
    </location>
</feature>
<feature type="modified residue" description="Phosphoserine" evidence="2">
    <location>
        <position position="264"/>
    </location>
</feature>
<feature type="modified residue" description="Phosphoserine" evidence="2">
    <location>
        <position position="267"/>
    </location>
</feature>
<feature type="modified residue" description="Phosphoserine" evidence="2">
    <location>
        <position position="272"/>
    </location>
</feature>
<feature type="modified residue" description="Phosphoserine" evidence="2">
    <location>
        <position position="277"/>
    </location>
</feature>
<feature type="modified residue" description="Phosphoserine" evidence="2">
    <location>
        <position position="288"/>
    </location>
</feature>
<feature type="modified residue" description="Phosphoserine" evidence="2">
    <location>
        <position position="300"/>
    </location>
</feature>
<feature type="modified residue" description="Phosphoserine" evidence="2">
    <location>
        <position position="305"/>
    </location>
</feature>
<feature type="modified residue" description="Phosphoserine" evidence="2">
    <location>
        <position position="307"/>
    </location>
</feature>
<feature type="modified residue" description="Phosphoserine" evidence="2">
    <location>
        <position position="308"/>
    </location>
</feature>
<feature type="glycosylation site" description="O-linked (GalNAc...) threonine" evidence="1">
    <location>
        <position position="130"/>
    </location>
</feature>
<feature type="glycosylation site" description="O-linked (GalNAc...) threonine" evidence="1">
    <location>
        <position position="134"/>
    </location>
</feature>
<feature type="glycosylation site" description="O-linked (GalNAc...) threonine" evidence="1">
    <location>
        <position position="139"/>
    </location>
</feature>
<feature type="glycosylation site" description="O-linked (GalNAc...) threonine" evidence="1">
    <location>
        <position position="143"/>
    </location>
</feature>
<feature type="glycosylation site" description="O-linked (GalNAc...) threonine" evidence="1">
    <location>
        <position position="148"/>
    </location>
</feature>
<feature type="glycosylation site" description="O-linked (Xyl...) (chondroitin sulfate) serine" evidence="2">
    <location>
        <position position="231"/>
    </location>
</feature>
<feature type="glycosylation site" description="O-linked (Xyl...) (chondroitin sulfate) serine" evidence="2">
    <location>
        <position position="305"/>
    </location>
</feature>
<feature type="sequence conflict" description="In Ref. 2; BAA03980." evidence="6" ref="2">
    <original>M</original>
    <variation>V</variation>
    <location>
        <position position="85"/>
    </location>
</feature>
<feature type="sequence conflict" description="In Ref. 2; BAA03980." evidence="6" ref="2">
    <original>R</original>
    <variation>Q</variation>
    <location>
        <position position="100"/>
    </location>
</feature>
<feature type="sequence conflict" description="In Ref. 2." evidence="6" ref="2">
    <original>E</original>
    <variation>ESDE</variation>
    <location>
        <position position="128"/>
    </location>
</feature>
<feature type="sequence conflict" description="In Ref. 2; BAA03980." evidence="6" ref="2">
    <original>T</original>
    <variation>I</variation>
    <location>
        <position position="151"/>
    </location>
</feature>
<comment type="function">
    <text evidence="4">Major non-collagenous bone protein that binds tightly to hydroxyapatite. Appears to form an integral part of the mineralized matrix. Probably important to cell-matrix interaction.</text>
</comment>
<comment type="function">
    <text evidence="3">Acts as a cytokine involved in enhancing production of interferon-gamma and interleukin-12 and reducing production of interleukin-10 and is essential in the pathway that leads to type I immunity.</text>
</comment>
<comment type="subunit">
    <text evidence="3">Interacts (via N-terminus) with integrin ITGA9:ITGB1.</text>
</comment>
<comment type="subcellular location">
    <subcellularLocation>
        <location evidence="2">Secreted</location>
    </subcellularLocation>
</comment>
<comment type="PTM">
    <text evidence="2 3">Extensively phosphorylated by FAM20C in the extracellular medium at multiple sites within the S-x-E/pS motif (By similarity). The phosphorylated form inhibits hydroxyapatite crystallization. Dephosphorylation via a mechanism involving ALPL/TNAP promotes hydroxyapatite crystallization (By similarity).</text>
</comment>
<comment type="PTM">
    <text evidence="2">O-glycosylated.</text>
</comment>
<comment type="PTM">
    <text evidence="4">Forms covalent cross-links mediated by transglutaminase TGM2, between a glutamine and the epsilon-amino group of a lysine residue, forming homopolymers and heteropolymers, increasing its collagen binding properties.</text>
</comment>
<comment type="similarity">
    <text evidence="6">Belongs to the osteopontin family.</text>
</comment>
<proteinExistence type="evidence at transcript level"/>
<evidence type="ECO:0000250" key="1"/>
<evidence type="ECO:0000250" key="2">
    <source>
        <dbReference type="UniProtKB" id="P10451"/>
    </source>
</evidence>
<evidence type="ECO:0000250" key="3">
    <source>
        <dbReference type="UniProtKB" id="P10923"/>
    </source>
</evidence>
<evidence type="ECO:0000250" key="4">
    <source>
        <dbReference type="UniProtKB" id="P31096"/>
    </source>
</evidence>
<evidence type="ECO:0000256" key="5">
    <source>
        <dbReference type="SAM" id="MobiDB-lite"/>
    </source>
</evidence>
<evidence type="ECO:0000305" key="6"/>
<accession>P31097</accession>
<accession>P46631</accession>
<protein>
    <recommendedName>
        <fullName>Osteopontin</fullName>
    </recommendedName>
    <alternativeName>
        <fullName>Bone sialoprotein 1</fullName>
    </alternativeName>
    <alternativeName>
        <fullName>OC-1</fullName>
    </alternativeName>
    <alternativeName>
        <fullName>Secreted phosphoprotein 1</fullName>
        <shortName>SPP-1</shortName>
    </alternativeName>
</protein>
<sequence>MRIAVICFCLLGMAYALPVKHADSGSSEEKQLYHKHPDALATWLNPDPSQKQNLLTPQNAMSSEEKDDLKQETLPSKSIESHDHMDDIDEDEDDDHVDNRDSNESDDADHPDDSHHSDESHQSDESDEVTVYPTEDAATTVFTEVVPTVETYDGRGDSVAYRLKRSKSKMFHVSNAQYPGASEEDLSSHVDSEDLDDTPRAIPVAQHLNVPSDWDSQEKDSHDVSQVDDHSVETQSHEQARQYKREANDNSVEHSHSIDSQESSKVSQESQSREFRSHEDKLAIEPKSEEDEEHRQLRVSHELDSTSSEIN</sequence>
<gene>
    <name type="primary">SPP1</name>
</gene>
<reference key="1">
    <citation type="journal article" date="1992" name="Biochem. Biophys. Res. Commun.">
        <title>Identification of osteopontin in isolated rabbit osteoclasts.</title>
        <authorList>
            <person name="Tezuka K."/>
            <person name="Sato T."/>
            <person name="Kamioka H."/>
            <person name="Nijweide P.J."/>
            <person name="Tanaka K."/>
            <person name="Matsuo T."/>
            <person name="Ohta M."/>
            <person name="Kurihara N."/>
            <person name="Hakeda Y."/>
            <person name="Kumegawa M."/>
        </authorList>
    </citation>
    <scope>NUCLEOTIDE SEQUENCE [MRNA]</scope>
    <source>
        <tissue>Osteoclast</tissue>
    </source>
</reference>
<reference key="2">
    <citation type="journal article" date="1995" name="Biochem. J.">
        <title>Expression of wild-type and mutated rabbit osteopontin in Escherichia coli, and their effects on adhesion and migration of P388D1 cells.</title>
        <authorList>
            <person name="Nasu K."/>
            <person name="Ishida T."/>
            <person name="Setoguchi M."/>
            <person name="Higuchi Y."/>
            <person name="Akizuki S."/>
            <person name="Yamamoto S."/>
        </authorList>
    </citation>
    <scope>NUCLEOTIDE SEQUENCE [MRNA]</scope>
    <source>
        <tissue>Myeloid</tissue>
    </source>
</reference>
<keyword id="KW-0091">Biomineralization</keyword>
<keyword id="KW-0130">Cell adhesion</keyword>
<keyword id="KW-0202">Cytokine</keyword>
<keyword id="KW-0325">Glycoprotein</keyword>
<keyword id="KW-0597">Phosphoprotein</keyword>
<keyword id="KW-0654">Proteoglycan</keyword>
<keyword id="KW-1185">Reference proteome</keyword>
<keyword id="KW-0964">Secreted</keyword>
<keyword id="KW-0730">Sialic acid</keyword>
<keyword id="KW-0732">Signal</keyword>
<name>OSTP_RABIT</name>
<organism>
    <name type="scientific">Oryctolagus cuniculus</name>
    <name type="common">Rabbit</name>
    <dbReference type="NCBI Taxonomy" id="9986"/>
    <lineage>
        <taxon>Eukaryota</taxon>
        <taxon>Metazoa</taxon>
        <taxon>Chordata</taxon>
        <taxon>Craniata</taxon>
        <taxon>Vertebrata</taxon>
        <taxon>Euteleostomi</taxon>
        <taxon>Mammalia</taxon>
        <taxon>Eutheria</taxon>
        <taxon>Euarchontoglires</taxon>
        <taxon>Glires</taxon>
        <taxon>Lagomorpha</taxon>
        <taxon>Leporidae</taxon>
        <taxon>Oryctolagus</taxon>
    </lineage>
</organism>